<gene>
    <name type="ordered locus">RBAM_027690</name>
</gene>
<reference key="1">
    <citation type="journal article" date="2007" name="Nat. Biotechnol.">
        <title>Comparative analysis of the complete genome sequence of the plant growth-promoting bacterium Bacillus amyloliquefaciens FZB42.</title>
        <authorList>
            <person name="Chen X.H."/>
            <person name="Koumoutsi A."/>
            <person name="Scholz R."/>
            <person name="Eisenreich A."/>
            <person name="Schneider K."/>
            <person name="Heinemeyer I."/>
            <person name="Morgenstern B."/>
            <person name="Voss B."/>
            <person name="Hess W.R."/>
            <person name="Reva O."/>
            <person name="Junge H."/>
            <person name="Voigt B."/>
            <person name="Jungblut P.R."/>
            <person name="Vater J."/>
            <person name="Suessmuth R."/>
            <person name="Liesegang H."/>
            <person name="Strittmatter A."/>
            <person name="Gottschalk G."/>
            <person name="Borriss R."/>
        </authorList>
    </citation>
    <scope>NUCLEOTIDE SEQUENCE [LARGE SCALE GENOMIC DNA]</scope>
    <source>
        <strain>DSM 23117 / BGSC 10A6 / LMG 26770 / FZB42</strain>
    </source>
</reference>
<feature type="chain" id="PRO_1000080178" description="Putative membrane protein insertion efficiency factor">
    <location>
        <begin position="1"/>
        <end position="75"/>
    </location>
</feature>
<name>YIDD_BACVZ</name>
<organism>
    <name type="scientific">Bacillus velezensis (strain DSM 23117 / BGSC 10A6 / LMG 26770 / FZB42)</name>
    <name type="common">Bacillus amyloliquefaciens subsp. plantarum</name>
    <dbReference type="NCBI Taxonomy" id="326423"/>
    <lineage>
        <taxon>Bacteria</taxon>
        <taxon>Bacillati</taxon>
        <taxon>Bacillota</taxon>
        <taxon>Bacilli</taxon>
        <taxon>Bacillales</taxon>
        <taxon>Bacillaceae</taxon>
        <taxon>Bacillus</taxon>
        <taxon>Bacillus amyloliquefaciens group</taxon>
    </lineage>
</organism>
<keyword id="KW-1003">Cell membrane</keyword>
<keyword id="KW-0472">Membrane</keyword>
<comment type="function">
    <text evidence="1">Could be involved in insertion of integral membrane proteins into the membrane.</text>
</comment>
<comment type="subcellular location">
    <subcellularLocation>
        <location evidence="1">Cell membrane</location>
        <topology evidence="1">Peripheral membrane protein</topology>
        <orientation evidence="1">Cytoplasmic side</orientation>
    </subcellularLocation>
</comment>
<comment type="similarity">
    <text evidence="1">Belongs to the UPF0161 family.</text>
</comment>
<dbReference type="EMBL" id="CP000560">
    <property type="protein sequence ID" value="ABS75127.1"/>
    <property type="molecule type" value="Genomic_DNA"/>
</dbReference>
<dbReference type="GeneID" id="93081911"/>
<dbReference type="KEGG" id="bay:RBAM_027690"/>
<dbReference type="HOGENOM" id="CLU_144811_6_0_9"/>
<dbReference type="Proteomes" id="UP000001120">
    <property type="component" value="Chromosome"/>
</dbReference>
<dbReference type="GO" id="GO:0005886">
    <property type="term" value="C:plasma membrane"/>
    <property type="evidence" value="ECO:0007669"/>
    <property type="project" value="UniProtKB-SubCell"/>
</dbReference>
<dbReference type="HAMAP" id="MF_00386">
    <property type="entry name" value="UPF0161_YidD"/>
    <property type="match status" value="1"/>
</dbReference>
<dbReference type="InterPro" id="IPR002696">
    <property type="entry name" value="Membr_insert_effic_factor_YidD"/>
</dbReference>
<dbReference type="NCBIfam" id="TIGR00278">
    <property type="entry name" value="membrane protein insertion efficiency factor YidD"/>
    <property type="match status" value="1"/>
</dbReference>
<dbReference type="PANTHER" id="PTHR33383">
    <property type="entry name" value="MEMBRANE PROTEIN INSERTION EFFICIENCY FACTOR-RELATED"/>
    <property type="match status" value="1"/>
</dbReference>
<dbReference type="PANTHER" id="PTHR33383:SF1">
    <property type="entry name" value="MEMBRANE PROTEIN INSERTION EFFICIENCY FACTOR-RELATED"/>
    <property type="match status" value="1"/>
</dbReference>
<dbReference type="Pfam" id="PF01809">
    <property type="entry name" value="YidD"/>
    <property type="match status" value="1"/>
</dbReference>
<dbReference type="SMART" id="SM01234">
    <property type="entry name" value="Haemolytic"/>
    <property type="match status" value="1"/>
</dbReference>
<protein>
    <recommendedName>
        <fullName evidence="1">Putative membrane protein insertion efficiency factor</fullName>
    </recommendedName>
</protein>
<evidence type="ECO:0000255" key="1">
    <source>
        <dbReference type="HAMAP-Rule" id="MF_00386"/>
    </source>
</evidence>
<sequence length="75" mass="8467">MKTIMIAFIRGYQKFISPLTPPSCRFYPTCSQYGIEAVKTHGALKGGWLTLKRILKCHPFHPGGVDPVPDKKQKH</sequence>
<proteinExistence type="inferred from homology"/>
<accession>A7Z801</accession>